<proteinExistence type="inferred from homology"/>
<gene>
    <name evidence="1" type="primary">leuB</name>
    <name type="ordered locus">BMEII0404</name>
</gene>
<keyword id="KW-0028">Amino-acid biosynthesis</keyword>
<keyword id="KW-0100">Branched-chain amino acid biosynthesis</keyword>
<keyword id="KW-0963">Cytoplasm</keyword>
<keyword id="KW-0432">Leucine biosynthesis</keyword>
<keyword id="KW-0460">Magnesium</keyword>
<keyword id="KW-0464">Manganese</keyword>
<keyword id="KW-0479">Metal-binding</keyword>
<keyword id="KW-0520">NAD</keyword>
<keyword id="KW-0560">Oxidoreductase</keyword>
<accession>Q8YCX4</accession>
<organism>
    <name type="scientific">Brucella melitensis biotype 1 (strain ATCC 23456 / CCUG 17765 / NCTC 10094 / 16M)</name>
    <dbReference type="NCBI Taxonomy" id="224914"/>
    <lineage>
        <taxon>Bacteria</taxon>
        <taxon>Pseudomonadati</taxon>
        <taxon>Pseudomonadota</taxon>
        <taxon>Alphaproteobacteria</taxon>
        <taxon>Hyphomicrobiales</taxon>
        <taxon>Brucellaceae</taxon>
        <taxon>Brucella/Ochrobactrum group</taxon>
        <taxon>Brucella</taxon>
    </lineage>
</organism>
<sequence>MASRKLLLLPGDGIGPEAMAEVRKVIAFLNSDLNLGFETEEGLVGGCAYDAHGQAISDADMEKALAADAVLFGAVGGPKWDSVPYEVRPEGGLLRLRKDMQLYANLRPAICYPALAHSSSLKPEVIEGLDILILRELTGGVYFGEPKEIIDLGNGQKRGIDTQVYDTYEIERIADVAFELARTRRNKVTSMEKRNVMKSGVLWNQGVTARHKEKHADVQLEHMLADAGGMQLVRWPKQFDVILTDNLFGDLLSDVAAMLTGSLGMLPSASLGAADSKTGKRKALYEPVHGSAPDIAGKGIANPIAMIASLAMCLRYSFGLVAEADRLEAAIAGVLDDGIRTADIWSEGNTKVGTTEMGDAILAKFKALSA</sequence>
<comment type="function">
    <text evidence="1">Catalyzes the oxidation of 3-carboxy-2-hydroxy-4-methylpentanoate (3-isopropylmalate) to 3-carboxy-4-methyl-2-oxopentanoate. The product decarboxylates to 4-methyl-2 oxopentanoate.</text>
</comment>
<comment type="catalytic activity">
    <reaction evidence="1">
        <text>(2R,3S)-3-isopropylmalate + NAD(+) = 4-methyl-2-oxopentanoate + CO2 + NADH</text>
        <dbReference type="Rhea" id="RHEA:32271"/>
        <dbReference type="ChEBI" id="CHEBI:16526"/>
        <dbReference type="ChEBI" id="CHEBI:17865"/>
        <dbReference type="ChEBI" id="CHEBI:35121"/>
        <dbReference type="ChEBI" id="CHEBI:57540"/>
        <dbReference type="ChEBI" id="CHEBI:57945"/>
        <dbReference type="EC" id="1.1.1.85"/>
    </reaction>
</comment>
<comment type="cofactor">
    <cofactor evidence="1">
        <name>Mg(2+)</name>
        <dbReference type="ChEBI" id="CHEBI:18420"/>
    </cofactor>
    <cofactor evidence="1">
        <name>Mn(2+)</name>
        <dbReference type="ChEBI" id="CHEBI:29035"/>
    </cofactor>
    <text evidence="1">Binds 1 Mg(2+) or Mn(2+) ion per subunit.</text>
</comment>
<comment type="pathway">
    <text evidence="1">Amino-acid biosynthesis; L-leucine biosynthesis; L-leucine from 3-methyl-2-oxobutanoate: step 3/4.</text>
</comment>
<comment type="subunit">
    <text evidence="1">Homodimer.</text>
</comment>
<comment type="subcellular location">
    <subcellularLocation>
        <location evidence="1">Cytoplasm</location>
    </subcellularLocation>
</comment>
<comment type="similarity">
    <text evidence="1">Belongs to the isocitrate and isopropylmalate dehydrogenases family. LeuB type 1 subfamily.</text>
</comment>
<protein>
    <recommendedName>
        <fullName evidence="1">3-isopropylmalate dehydrogenase</fullName>
        <ecNumber evidence="1">1.1.1.85</ecNumber>
    </recommendedName>
    <alternativeName>
        <fullName evidence="1">3-IPM-DH</fullName>
    </alternativeName>
    <alternativeName>
        <fullName evidence="1">Beta-IPM dehydrogenase</fullName>
        <shortName evidence="1">IMDH</shortName>
    </alternativeName>
</protein>
<dbReference type="EC" id="1.1.1.85" evidence="1"/>
<dbReference type="EMBL" id="AE008918">
    <property type="protein sequence ID" value="AAL53646.1"/>
    <property type="molecule type" value="Genomic_DNA"/>
</dbReference>
<dbReference type="PIR" id="AC3560">
    <property type="entry name" value="AC3560"/>
</dbReference>
<dbReference type="RefSeq" id="WP_004682269.1">
    <property type="nucleotide sequence ID" value="NC_003318.1"/>
</dbReference>
<dbReference type="SMR" id="Q8YCX4"/>
<dbReference type="GeneID" id="29595898"/>
<dbReference type="KEGG" id="bme:BMEII0404"/>
<dbReference type="KEGG" id="bmel:DK63_2833"/>
<dbReference type="PATRIC" id="fig|224914.52.peg.2970"/>
<dbReference type="eggNOG" id="COG0473">
    <property type="taxonomic scope" value="Bacteria"/>
</dbReference>
<dbReference type="PhylomeDB" id="Q8YCX4"/>
<dbReference type="UniPathway" id="UPA00048">
    <property type="reaction ID" value="UER00072"/>
</dbReference>
<dbReference type="Proteomes" id="UP000000419">
    <property type="component" value="Chromosome II"/>
</dbReference>
<dbReference type="GO" id="GO:0005829">
    <property type="term" value="C:cytosol"/>
    <property type="evidence" value="ECO:0007669"/>
    <property type="project" value="TreeGrafter"/>
</dbReference>
<dbReference type="GO" id="GO:0003862">
    <property type="term" value="F:3-isopropylmalate dehydrogenase activity"/>
    <property type="evidence" value="ECO:0007669"/>
    <property type="project" value="UniProtKB-UniRule"/>
</dbReference>
<dbReference type="GO" id="GO:0000287">
    <property type="term" value="F:magnesium ion binding"/>
    <property type="evidence" value="ECO:0007669"/>
    <property type="project" value="InterPro"/>
</dbReference>
<dbReference type="GO" id="GO:0051287">
    <property type="term" value="F:NAD binding"/>
    <property type="evidence" value="ECO:0007669"/>
    <property type="project" value="InterPro"/>
</dbReference>
<dbReference type="GO" id="GO:0009098">
    <property type="term" value="P:L-leucine biosynthetic process"/>
    <property type="evidence" value="ECO:0007669"/>
    <property type="project" value="UniProtKB-UniRule"/>
</dbReference>
<dbReference type="FunFam" id="3.40.718.10:FF:000006">
    <property type="entry name" value="3-isopropylmalate dehydrogenase"/>
    <property type="match status" value="1"/>
</dbReference>
<dbReference type="Gene3D" id="3.40.718.10">
    <property type="entry name" value="Isopropylmalate Dehydrogenase"/>
    <property type="match status" value="1"/>
</dbReference>
<dbReference type="HAMAP" id="MF_01033">
    <property type="entry name" value="LeuB_type1"/>
    <property type="match status" value="1"/>
</dbReference>
<dbReference type="InterPro" id="IPR019818">
    <property type="entry name" value="IsoCit/isopropylmalate_DH_CS"/>
</dbReference>
<dbReference type="InterPro" id="IPR024084">
    <property type="entry name" value="IsoPropMal-DH-like_dom"/>
</dbReference>
<dbReference type="InterPro" id="IPR004429">
    <property type="entry name" value="Isopropylmalate_DH"/>
</dbReference>
<dbReference type="NCBIfam" id="TIGR00169">
    <property type="entry name" value="leuB"/>
    <property type="match status" value="1"/>
</dbReference>
<dbReference type="PANTHER" id="PTHR42979">
    <property type="entry name" value="3-ISOPROPYLMALATE DEHYDROGENASE"/>
    <property type="match status" value="1"/>
</dbReference>
<dbReference type="PANTHER" id="PTHR42979:SF1">
    <property type="entry name" value="3-ISOPROPYLMALATE DEHYDROGENASE"/>
    <property type="match status" value="1"/>
</dbReference>
<dbReference type="Pfam" id="PF00180">
    <property type="entry name" value="Iso_dh"/>
    <property type="match status" value="1"/>
</dbReference>
<dbReference type="SMART" id="SM01329">
    <property type="entry name" value="Iso_dh"/>
    <property type="match status" value="1"/>
</dbReference>
<dbReference type="SUPFAM" id="SSF53659">
    <property type="entry name" value="Isocitrate/Isopropylmalate dehydrogenase-like"/>
    <property type="match status" value="1"/>
</dbReference>
<dbReference type="PROSITE" id="PS00470">
    <property type="entry name" value="IDH_IMDH"/>
    <property type="match status" value="1"/>
</dbReference>
<name>LEU3_BRUME</name>
<feature type="chain" id="PRO_0000083653" description="3-isopropylmalate dehydrogenase">
    <location>
        <begin position="1"/>
        <end position="370"/>
    </location>
</feature>
<feature type="binding site" evidence="1">
    <location>
        <begin position="77"/>
        <end position="90"/>
    </location>
    <ligand>
        <name>NAD(+)</name>
        <dbReference type="ChEBI" id="CHEBI:57540"/>
    </ligand>
</feature>
<feature type="binding site" evidence="1">
    <location>
        <position position="97"/>
    </location>
    <ligand>
        <name>substrate</name>
    </ligand>
</feature>
<feature type="binding site" evidence="1">
    <location>
        <position position="107"/>
    </location>
    <ligand>
        <name>substrate</name>
    </ligand>
</feature>
<feature type="binding site" evidence="1">
    <location>
        <position position="135"/>
    </location>
    <ligand>
        <name>substrate</name>
    </ligand>
</feature>
<feature type="binding site" evidence="1">
    <location>
        <position position="226"/>
    </location>
    <ligand>
        <name>Mg(2+)</name>
        <dbReference type="ChEBI" id="CHEBI:18420"/>
    </ligand>
</feature>
<feature type="binding site" evidence="1">
    <location>
        <position position="226"/>
    </location>
    <ligand>
        <name>substrate</name>
    </ligand>
</feature>
<feature type="binding site" evidence="1">
    <location>
        <position position="250"/>
    </location>
    <ligand>
        <name>Mg(2+)</name>
        <dbReference type="ChEBI" id="CHEBI:18420"/>
    </ligand>
</feature>
<feature type="binding site" evidence="1">
    <location>
        <position position="254"/>
    </location>
    <ligand>
        <name>Mg(2+)</name>
        <dbReference type="ChEBI" id="CHEBI:18420"/>
    </ligand>
</feature>
<feature type="binding site" evidence="1">
    <location>
        <begin position="290"/>
        <end position="302"/>
    </location>
    <ligand>
        <name>NAD(+)</name>
        <dbReference type="ChEBI" id="CHEBI:57540"/>
    </ligand>
</feature>
<feature type="site" description="Important for catalysis" evidence="1">
    <location>
        <position position="142"/>
    </location>
</feature>
<feature type="site" description="Important for catalysis" evidence="1">
    <location>
        <position position="193"/>
    </location>
</feature>
<reference key="1">
    <citation type="journal article" date="2002" name="Proc. Natl. Acad. Sci. U.S.A.">
        <title>The genome sequence of the facultative intracellular pathogen Brucella melitensis.</title>
        <authorList>
            <person name="DelVecchio V.G."/>
            <person name="Kapatral V."/>
            <person name="Redkar R.J."/>
            <person name="Patra G."/>
            <person name="Mujer C."/>
            <person name="Los T."/>
            <person name="Ivanova N."/>
            <person name="Anderson I."/>
            <person name="Bhattacharyya A."/>
            <person name="Lykidis A."/>
            <person name="Reznik G."/>
            <person name="Jablonski L."/>
            <person name="Larsen N."/>
            <person name="D'Souza M."/>
            <person name="Bernal A."/>
            <person name="Mazur M."/>
            <person name="Goltsman E."/>
            <person name="Selkov E."/>
            <person name="Elzer P.H."/>
            <person name="Hagius S."/>
            <person name="O'Callaghan D."/>
            <person name="Letesson J.-J."/>
            <person name="Haselkorn R."/>
            <person name="Kyrpides N.C."/>
            <person name="Overbeek R."/>
        </authorList>
    </citation>
    <scope>NUCLEOTIDE SEQUENCE [LARGE SCALE GENOMIC DNA]</scope>
    <source>
        <strain>ATCC 23456 / CCUG 17765 / NCTC 10094 / 16M</strain>
    </source>
</reference>
<evidence type="ECO:0000255" key="1">
    <source>
        <dbReference type="HAMAP-Rule" id="MF_01033"/>
    </source>
</evidence>